<reference key="1">
    <citation type="journal article" date="2007" name="Environ. Microbiol.">
        <title>Whole-genome analysis of the ammonia-oxidizing bacterium, Nitrosomonas eutropha C91: implications for niche adaptation.</title>
        <authorList>
            <person name="Stein L.Y."/>
            <person name="Arp D.J."/>
            <person name="Berube P.M."/>
            <person name="Chain P.S."/>
            <person name="Hauser L."/>
            <person name="Jetten M.S."/>
            <person name="Klotz M.G."/>
            <person name="Larimer F.W."/>
            <person name="Norton J.M."/>
            <person name="Op den Camp H.J.M."/>
            <person name="Shin M."/>
            <person name="Wei X."/>
        </authorList>
    </citation>
    <scope>NUCLEOTIDE SEQUENCE [LARGE SCALE GENOMIC DNA]</scope>
    <source>
        <strain>DSM 101675 / C91 / Nm57</strain>
    </source>
</reference>
<feature type="chain" id="PRO_1000006715" description="Aspartate--tRNA(Asp/Asn) ligase">
    <location>
        <begin position="1"/>
        <end position="593"/>
    </location>
</feature>
<feature type="region of interest" description="Aspartate" evidence="1">
    <location>
        <begin position="196"/>
        <end position="199"/>
    </location>
</feature>
<feature type="binding site" evidence="1">
    <location>
        <position position="172"/>
    </location>
    <ligand>
        <name>L-aspartate</name>
        <dbReference type="ChEBI" id="CHEBI:29991"/>
    </ligand>
</feature>
<feature type="binding site" evidence="1">
    <location>
        <begin position="218"/>
        <end position="220"/>
    </location>
    <ligand>
        <name>ATP</name>
        <dbReference type="ChEBI" id="CHEBI:30616"/>
    </ligand>
</feature>
<feature type="binding site" evidence="1">
    <location>
        <position position="218"/>
    </location>
    <ligand>
        <name>L-aspartate</name>
        <dbReference type="ChEBI" id="CHEBI:29991"/>
    </ligand>
</feature>
<feature type="binding site" evidence="1">
    <location>
        <position position="227"/>
    </location>
    <ligand>
        <name>ATP</name>
        <dbReference type="ChEBI" id="CHEBI:30616"/>
    </ligand>
</feature>
<feature type="binding site" evidence="1">
    <location>
        <position position="450"/>
    </location>
    <ligand>
        <name>L-aspartate</name>
        <dbReference type="ChEBI" id="CHEBI:29991"/>
    </ligand>
</feature>
<feature type="binding site" evidence="1">
    <location>
        <position position="484"/>
    </location>
    <ligand>
        <name>ATP</name>
        <dbReference type="ChEBI" id="CHEBI:30616"/>
    </ligand>
</feature>
<feature type="binding site" evidence="1">
    <location>
        <position position="491"/>
    </location>
    <ligand>
        <name>L-aspartate</name>
        <dbReference type="ChEBI" id="CHEBI:29991"/>
    </ligand>
</feature>
<feature type="binding site" evidence="1">
    <location>
        <begin position="536"/>
        <end position="539"/>
    </location>
    <ligand>
        <name>ATP</name>
        <dbReference type="ChEBI" id="CHEBI:30616"/>
    </ligand>
</feature>
<feature type="site" description="Important for tRNA non-discrimination" evidence="1">
    <location>
        <position position="30"/>
    </location>
</feature>
<feature type="site" description="Important for tRNA non-discrimination" evidence="1">
    <location>
        <position position="81"/>
    </location>
</feature>
<protein>
    <recommendedName>
        <fullName evidence="1">Aspartate--tRNA(Asp/Asn) ligase</fullName>
        <ecNumber evidence="1">6.1.1.23</ecNumber>
    </recommendedName>
    <alternativeName>
        <fullName evidence="1">Aspartyl-tRNA synthetase</fullName>
        <shortName evidence="1">AspRS</shortName>
    </alternativeName>
    <alternativeName>
        <fullName evidence="1">Non-discriminating aspartyl-tRNA synthetase</fullName>
        <shortName evidence="1">ND-AspRS</shortName>
    </alternativeName>
</protein>
<name>SYDND_NITEC</name>
<proteinExistence type="inferred from homology"/>
<organism>
    <name type="scientific">Nitrosomonas eutropha (strain DSM 101675 / C91 / Nm57)</name>
    <dbReference type="NCBI Taxonomy" id="335283"/>
    <lineage>
        <taxon>Bacteria</taxon>
        <taxon>Pseudomonadati</taxon>
        <taxon>Pseudomonadota</taxon>
        <taxon>Betaproteobacteria</taxon>
        <taxon>Nitrosomonadales</taxon>
        <taxon>Nitrosomonadaceae</taxon>
        <taxon>Nitrosomonas</taxon>
    </lineage>
</organism>
<accession>Q0AIE4</accession>
<evidence type="ECO:0000255" key="1">
    <source>
        <dbReference type="HAMAP-Rule" id="MF_00044"/>
    </source>
</evidence>
<keyword id="KW-0030">Aminoacyl-tRNA synthetase</keyword>
<keyword id="KW-0067">ATP-binding</keyword>
<keyword id="KW-0963">Cytoplasm</keyword>
<keyword id="KW-0436">Ligase</keyword>
<keyword id="KW-0547">Nucleotide-binding</keyword>
<keyword id="KW-0648">Protein biosynthesis</keyword>
<gene>
    <name evidence="1" type="primary">aspS</name>
    <name type="ordered locus">Neut_0616</name>
</gene>
<comment type="function">
    <text evidence="1">Aspartyl-tRNA synthetase with relaxed tRNA specificity since it is able to aspartylate not only its cognate tRNA(Asp) but also tRNA(Asn). Reaction proceeds in two steps: L-aspartate is first activated by ATP to form Asp-AMP and then transferred to the acceptor end of tRNA(Asp/Asn).</text>
</comment>
<comment type="catalytic activity">
    <reaction evidence="1">
        <text>tRNA(Asx) + L-aspartate + ATP = L-aspartyl-tRNA(Asx) + AMP + diphosphate</text>
        <dbReference type="Rhea" id="RHEA:18349"/>
        <dbReference type="Rhea" id="RHEA-COMP:9710"/>
        <dbReference type="Rhea" id="RHEA-COMP:9711"/>
        <dbReference type="ChEBI" id="CHEBI:29991"/>
        <dbReference type="ChEBI" id="CHEBI:30616"/>
        <dbReference type="ChEBI" id="CHEBI:33019"/>
        <dbReference type="ChEBI" id="CHEBI:78442"/>
        <dbReference type="ChEBI" id="CHEBI:78516"/>
        <dbReference type="ChEBI" id="CHEBI:456215"/>
        <dbReference type="EC" id="6.1.1.23"/>
    </reaction>
</comment>
<comment type="subunit">
    <text evidence="1">Homodimer.</text>
</comment>
<comment type="subcellular location">
    <subcellularLocation>
        <location evidence="1">Cytoplasm</location>
    </subcellularLocation>
</comment>
<comment type="similarity">
    <text evidence="1">Belongs to the class-II aminoacyl-tRNA synthetase family. Type 1 subfamily.</text>
</comment>
<sequence length="593" mass="67311">MRTDYCGAINTRHLGRTITLCGWVHRRRDHGGVIFIDLRDREGIVQIVCDPDNVAAFPIAEKIRNEFVLEITGLVRHRPEGTVNRGIPSGEIEVLVSTIEILNPSLTPPFQMDDDNLSEAIRLEYRYLDLRRPAMQHNIRLRHKVTMATRVFLDQHGFIDVETPMLTKSTPEGARDYLVPSRVNVGCFFALPQSPQLFKQLLMVSGFDRYYQITRCFRDEDLRADRQPEFTQIDIETSFLQENDIMDLMEDMIRRLFADVINVSLPDPFPRISYADAMFRYGSDKPDLRVPLELTELTDLMQDVPFQVFRDAAQKPGGRVAALRVPGGGELSRKEIDEYTRFVGIYGAKGLAYIKINDLTKGMEGLQSPILKFLPEPVVQSMLERTQAQNGDLVFFGADKVKTVNDALGALRVKIGHERGLATNLWQPLWVVDFPMFEWDEEEKRWQALHHPFTAPSQGHEDFLATDPGKALSRAYDMVLNGMEIGGGSIRIHRQDVQSKVFQALNIADDEAKLKFGFLLDALQYGAPPHGGIAFGLDRIVAMMTGTDSIRDVIAFPKTQRAQCLLTQAPSTVEEKQLRELHIRLRKTDITTD</sequence>
<dbReference type="EC" id="6.1.1.23" evidence="1"/>
<dbReference type="EMBL" id="CP000450">
    <property type="protein sequence ID" value="ABI58888.1"/>
    <property type="molecule type" value="Genomic_DNA"/>
</dbReference>
<dbReference type="RefSeq" id="WP_011633729.1">
    <property type="nucleotide sequence ID" value="NC_008344.1"/>
</dbReference>
<dbReference type="SMR" id="Q0AIE4"/>
<dbReference type="STRING" id="335283.Neut_0616"/>
<dbReference type="KEGG" id="net:Neut_0616"/>
<dbReference type="eggNOG" id="COG0173">
    <property type="taxonomic scope" value="Bacteria"/>
</dbReference>
<dbReference type="HOGENOM" id="CLU_014330_3_2_4"/>
<dbReference type="OrthoDB" id="9802326at2"/>
<dbReference type="Proteomes" id="UP000001966">
    <property type="component" value="Chromosome"/>
</dbReference>
<dbReference type="GO" id="GO:0005737">
    <property type="term" value="C:cytoplasm"/>
    <property type="evidence" value="ECO:0007669"/>
    <property type="project" value="UniProtKB-SubCell"/>
</dbReference>
<dbReference type="GO" id="GO:0004815">
    <property type="term" value="F:aspartate-tRNA ligase activity"/>
    <property type="evidence" value="ECO:0007669"/>
    <property type="project" value="UniProtKB-UniRule"/>
</dbReference>
<dbReference type="GO" id="GO:0050560">
    <property type="term" value="F:aspartate-tRNA(Asn) ligase activity"/>
    <property type="evidence" value="ECO:0007669"/>
    <property type="project" value="UniProtKB-EC"/>
</dbReference>
<dbReference type="GO" id="GO:0005524">
    <property type="term" value="F:ATP binding"/>
    <property type="evidence" value="ECO:0007669"/>
    <property type="project" value="UniProtKB-UniRule"/>
</dbReference>
<dbReference type="GO" id="GO:0003676">
    <property type="term" value="F:nucleic acid binding"/>
    <property type="evidence" value="ECO:0007669"/>
    <property type="project" value="InterPro"/>
</dbReference>
<dbReference type="GO" id="GO:0006422">
    <property type="term" value="P:aspartyl-tRNA aminoacylation"/>
    <property type="evidence" value="ECO:0007669"/>
    <property type="project" value="UniProtKB-UniRule"/>
</dbReference>
<dbReference type="CDD" id="cd00777">
    <property type="entry name" value="AspRS_core"/>
    <property type="match status" value="1"/>
</dbReference>
<dbReference type="CDD" id="cd04317">
    <property type="entry name" value="EcAspRS_like_N"/>
    <property type="match status" value="1"/>
</dbReference>
<dbReference type="Gene3D" id="3.30.930.10">
    <property type="entry name" value="Bira Bifunctional Protein, Domain 2"/>
    <property type="match status" value="1"/>
</dbReference>
<dbReference type="Gene3D" id="3.30.1360.30">
    <property type="entry name" value="GAD-like domain"/>
    <property type="match status" value="1"/>
</dbReference>
<dbReference type="Gene3D" id="2.40.50.140">
    <property type="entry name" value="Nucleic acid-binding proteins"/>
    <property type="match status" value="1"/>
</dbReference>
<dbReference type="HAMAP" id="MF_00044">
    <property type="entry name" value="Asp_tRNA_synth_type1"/>
    <property type="match status" value="1"/>
</dbReference>
<dbReference type="InterPro" id="IPR004364">
    <property type="entry name" value="Aa-tRNA-synt_II"/>
</dbReference>
<dbReference type="InterPro" id="IPR006195">
    <property type="entry name" value="aa-tRNA-synth_II"/>
</dbReference>
<dbReference type="InterPro" id="IPR045864">
    <property type="entry name" value="aa-tRNA-synth_II/BPL/LPL"/>
</dbReference>
<dbReference type="InterPro" id="IPR004524">
    <property type="entry name" value="Asp-tRNA-ligase_1"/>
</dbReference>
<dbReference type="InterPro" id="IPR047089">
    <property type="entry name" value="Asp-tRNA-ligase_1_N"/>
</dbReference>
<dbReference type="InterPro" id="IPR002312">
    <property type="entry name" value="Asp/Asn-tRNA-synth_IIb"/>
</dbReference>
<dbReference type="InterPro" id="IPR047090">
    <property type="entry name" value="AspRS_core"/>
</dbReference>
<dbReference type="InterPro" id="IPR004115">
    <property type="entry name" value="GAD-like_sf"/>
</dbReference>
<dbReference type="InterPro" id="IPR029351">
    <property type="entry name" value="GAD_dom"/>
</dbReference>
<dbReference type="InterPro" id="IPR012340">
    <property type="entry name" value="NA-bd_OB-fold"/>
</dbReference>
<dbReference type="InterPro" id="IPR004365">
    <property type="entry name" value="NA-bd_OB_tRNA"/>
</dbReference>
<dbReference type="NCBIfam" id="TIGR00459">
    <property type="entry name" value="aspS_bact"/>
    <property type="match status" value="1"/>
</dbReference>
<dbReference type="NCBIfam" id="NF001750">
    <property type="entry name" value="PRK00476.1"/>
    <property type="match status" value="1"/>
</dbReference>
<dbReference type="PANTHER" id="PTHR22594:SF5">
    <property type="entry name" value="ASPARTATE--TRNA LIGASE, MITOCHONDRIAL"/>
    <property type="match status" value="1"/>
</dbReference>
<dbReference type="PANTHER" id="PTHR22594">
    <property type="entry name" value="ASPARTYL/LYSYL-TRNA SYNTHETASE"/>
    <property type="match status" value="1"/>
</dbReference>
<dbReference type="Pfam" id="PF02938">
    <property type="entry name" value="GAD"/>
    <property type="match status" value="1"/>
</dbReference>
<dbReference type="Pfam" id="PF00152">
    <property type="entry name" value="tRNA-synt_2"/>
    <property type="match status" value="1"/>
</dbReference>
<dbReference type="Pfam" id="PF01336">
    <property type="entry name" value="tRNA_anti-codon"/>
    <property type="match status" value="1"/>
</dbReference>
<dbReference type="PRINTS" id="PR01042">
    <property type="entry name" value="TRNASYNTHASP"/>
</dbReference>
<dbReference type="SUPFAM" id="SSF55681">
    <property type="entry name" value="Class II aaRS and biotin synthetases"/>
    <property type="match status" value="1"/>
</dbReference>
<dbReference type="SUPFAM" id="SSF55261">
    <property type="entry name" value="GAD domain-like"/>
    <property type="match status" value="1"/>
</dbReference>
<dbReference type="SUPFAM" id="SSF50249">
    <property type="entry name" value="Nucleic acid-binding proteins"/>
    <property type="match status" value="1"/>
</dbReference>
<dbReference type="PROSITE" id="PS50862">
    <property type="entry name" value="AA_TRNA_LIGASE_II"/>
    <property type="match status" value="1"/>
</dbReference>